<organism>
    <name type="scientific">Homo sapiens</name>
    <name type="common">Human</name>
    <dbReference type="NCBI Taxonomy" id="9606"/>
    <lineage>
        <taxon>Eukaryota</taxon>
        <taxon>Metazoa</taxon>
        <taxon>Chordata</taxon>
        <taxon>Craniata</taxon>
        <taxon>Vertebrata</taxon>
        <taxon>Euteleostomi</taxon>
        <taxon>Mammalia</taxon>
        <taxon>Eutheria</taxon>
        <taxon>Euarchontoglires</taxon>
        <taxon>Primates</taxon>
        <taxon>Haplorrhini</taxon>
        <taxon>Catarrhini</taxon>
        <taxon>Hominidae</taxon>
        <taxon>Homo</taxon>
    </lineage>
</organism>
<name>SPTC3_HUMAN</name>
<reference key="1">
    <citation type="journal article" date="2006" name="J. Biol. Chem.">
        <title>Cloning and initial characterization of a new subunit for mammalian serine-palmitoyltransferase.</title>
        <authorList>
            <person name="Hornemann T."/>
            <person name="Richard S."/>
            <person name="Ruetti M.F."/>
            <person name="Wei Y."/>
            <person name="von Eckardstein A."/>
        </authorList>
    </citation>
    <scope>NUCLEOTIDE SEQUENCE [MRNA] (ISOFORM 1)</scope>
    <scope>CATALYTIC ACTIVITY</scope>
    <scope>TISSUE SPECIFICITY</scope>
</reference>
<reference key="2">
    <citation type="journal article" date="2004" name="Nat. Genet.">
        <title>Complete sequencing and characterization of 21,243 full-length human cDNAs.</title>
        <authorList>
            <person name="Ota T."/>
            <person name="Suzuki Y."/>
            <person name="Nishikawa T."/>
            <person name="Otsuki T."/>
            <person name="Sugiyama T."/>
            <person name="Irie R."/>
            <person name="Wakamatsu A."/>
            <person name="Hayashi K."/>
            <person name="Sato H."/>
            <person name="Nagai K."/>
            <person name="Kimura K."/>
            <person name="Makita H."/>
            <person name="Sekine M."/>
            <person name="Obayashi M."/>
            <person name="Nishi T."/>
            <person name="Shibahara T."/>
            <person name="Tanaka T."/>
            <person name="Ishii S."/>
            <person name="Yamamoto J."/>
            <person name="Saito K."/>
            <person name="Kawai Y."/>
            <person name="Isono Y."/>
            <person name="Nakamura Y."/>
            <person name="Nagahari K."/>
            <person name="Murakami K."/>
            <person name="Yasuda T."/>
            <person name="Iwayanagi T."/>
            <person name="Wagatsuma M."/>
            <person name="Shiratori A."/>
            <person name="Sudo H."/>
            <person name="Hosoiri T."/>
            <person name="Kaku Y."/>
            <person name="Kodaira H."/>
            <person name="Kondo H."/>
            <person name="Sugawara M."/>
            <person name="Takahashi M."/>
            <person name="Kanda K."/>
            <person name="Yokoi T."/>
            <person name="Furuya T."/>
            <person name="Kikkawa E."/>
            <person name="Omura Y."/>
            <person name="Abe K."/>
            <person name="Kamihara K."/>
            <person name="Katsuta N."/>
            <person name="Sato K."/>
            <person name="Tanikawa M."/>
            <person name="Yamazaki M."/>
            <person name="Ninomiya K."/>
            <person name="Ishibashi T."/>
            <person name="Yamashita H."/>
            <person name="Murakawa K."/>
            <person name="Fujimori K."/>
            <person name="Tanai H."/>
            <person name="Kimata M."/>
            <person name="Watanabe M."/>
            <person name="Hiraoka S."/>
            <person name="Chiba Y."/>
            <person name="Ishida S."/>
            <person name="Ono Y."/>
            <person name="Takiguchi S."/>
            <person name="Watanabe S."/>
            <person name="Yosida M."/>
            <person name="Hotuta T."/>
            <person name="Kusano J."/>
            <person name="Kanehori K."/>
            <person name="Takahashi-Fujii A."/>
            <person name="Hara H."/>
            <person name="Tanase T.-O."/>
            <person name="Nomura Y."/>
            <person name="Togiya S."/>
            <person name="Komai F."/>
            <person name="Hara R."/>
            <person name="Takeuchi K."/>
            <person name="Arita M."/>
            <person name="Imose N."/>
            <person name="Musashino K."/>
            <person name="Yuuki H."/>
            <person name="Oshima A."/>
            <person name="Sasaki N."/>
            <person name="Aotsuka S."/>
            <person name="Yoshikawa Y."/>
            <person name="Matsunawa H."/>
            <person name="Ichihara T."/>
            <person name="Shiohata N."/>
            <person name="Sano S."/>
            <person name="Moriya S."/>
            <person name="Momiyama H."/>
            <person name="Satoh N."/>
            <person name="Takami S."/>
            <person name="Terashima Y."/>
            <person name="Suzuki O."/>
            <person name="Nakagawa S."/>
            <person name="Senoh A."/>
            <person name="Mizoguchi H."/>
            <person name="Goto Y."/>
            <person name="Shimizu F."/>
            <person name="Wakebe H."/>
            <person name="Hishigaki H."/>
            <person name="Watanabe T."/>
            <person name="Sugiyama A."/>
            <person name="Takemoto M."/>
            <person name="Kawakami B."/>
            <person name="Yamazaki M."/>
            <person name="Watanabe K."/>
            <person name="Kumagai A."/>
            <person name="Itakura S."/>
            <person name="Fukuzumi Y."/>
            <person name="Fujimori Y."/>
            <person name="Komiyama M."/>
            <person name="Tashiro H."/>
            <person name="Tanigami A."/>
            <person name="Fujiwara T."/>
            <person name="Ono T."/>
            <person name="Yamada K."/>
            <person name="Fujii Y."/>
            <person name="Ozaki K."/>
            <person name="Hirao M."/>
            <person name="Ohmori Y."/>
            <person name="Kawabata A."/>
            <person name="Hikiji T."/>
            <person name="Kobatake N."/>
            <person name="Inagaki H."/>
            <person name="Ikema Y."/>
            <person name="Okamoto S."/>
            <person name="Okitani R."/>
            <person name="Kawakami T."/>
            <person name="Noguchi S."/>
            <person name="Itoh T."/>
            <person name="Shigeta K."/>
            <person name="Senba T."/>
            <person name="Matsumura K."/>
            <person name="Nakajima Y."/>
            <person name="Mizuno T."/>
            <person name="Morinaga M."/>
            <person name="Sasaki M."/>
            <person name="Togashi T."/>
            <person name="Oyama M."/>
            <person name="Hata H."/>
            <person name="Watanabe M."/>
            <person name="Komatsu T."/>
            <person name="Mizushima-Sugano J."/>
            <person name="Satoh T."/>
            <person name="Shirai Y."/>
            <person name="Takahashi Y."/>
            <person name="Nakagawa K."/>
            <person name="Okumura K."/>
            <person name="Nagase T."/>
            <person name="Nomura N."/>
            <person name="Kikuchi H."/>
            <person name="Masuho Y."/>
            <person name="Yamashita R."/>
            <person name="Nakai K."/>
            <person name="Yada T."/>
            <person name="Nakamura Y."/>
            <person name="Ohara O."/>
            <person name="Isogai T."/>
            <person name="Sugano S."/>
        </authorList>
    </citation>
    <scope>NUCLEOTIDE SEQUENCE [LARGE SCALE MRNA] (ISOFORM 2)</scope>
    <source>
        <tissue>Placenta</tissue>
    </source>
</reference>
<reference key="3">
    <citation type="journal article" date="2001" name="Nature">
        <title>The DNA sequence and comparative analysis of human chromosome 20.</title>
        <authorList>
            <person name="Deloukas P."/>
            <person name="Matthews L.H."/>
            <person name="Ashurst J.L."/>
            <person name="Burton J."/>
            <person name="Gilbert J.G.R."/>
            <person name="Jones M."/>
            <person name="Stavrides G."/>
            <person name="Almeida J.P."/>
            <person name="Babbage A.K."/>
            <person name="Bagguley C.L."/>
            <person name="Bailey J."/>
            <person name="Barlow K.F."/>
            <person name="Bates K.N."/>
            <person name="Beard L.M."/>
            <person name="Beare D.M."/>
            <person name="Beasley O.P."/>
            <person name="Bird C.P."/>
            <person name="Blakey S.E."/>
            <person name="Bridgeman A.M."/>
            <person name="Brown A.J."/>
            <person name="Buck D."/>
            <person name="Burrill W.D."/>
            <person name="Butler A.P."/>
            <person name="Carder C."/>
            <person name="Carter N.P."/>
            <person name="Chapman J.C."/>
            <person name="Clamp M."/>
            <person name="Clark G."/>
            <person name="Clark L.N."/>
            <person name="Clark S.Y."/>
            <person name="Clee C.M."/>
            <person name="Clegg S."/>
            <person name="Cobley V.E."/>
            <person name="Collier R.E."/>
            <person name="Connor R.E."/>
            <person name="Corby N.R."/>
            <person name="Coulson A."/>
            <person name="Coville G.J."/>
            <person name="Deadman R."/>
            <person name="Dhami P.D."/>
            <person name="Dunn M."/>
            <person name="Ellington A.G."/>
            <person name="Frankland J.A."/>
            <person name="Fraser A."/>
            <person name="French L."/>
            <person name="Garner P."/>
            <person name="Grafham D.V."/>
            <person name="Griffiths C."/>
            <person name="Griffiths M.N.D."/>
            <person name="Gwilliam R."/>
            <person name="Hall R.E."/>
            <person name="Hammond S."/>
            <person name="Harley J.L."/>
            <person name="Heath P.D."/>
            <person name="Ho S."/>
            <person name="Holden J.L."/>
            <person name="Howden P.J."/>
            <person name="Huckle E."/>
            <person name="Hunt A.R."/>
            <person name="Hunt S.E."/>
            <person name="Jekosch K."/>
            <person name="Johnson C.M."/>
            <person name="Johnson D."/>
            <person name="Kay M.P."/>
            <person name="Kimberley A.M."/>
            <person name="King A."/>
            <person name="Knights A."/>
            <person name="Laird G.K."/>
            <person name="Lawlor S."/>
            <person name="Lehvaeslaiho M.H."/>
            <person name="Leversha M.A."/>
            <person name="Lloyd C."/>
            <person name="Lloyd D.M."/>
            <person name="Lovell J.D."/>
            <person name="Marsh V.L."/>
            <person name="Martin S.L."/>
            <person name="McConnachie L.J."/>
            <person name="McLay K."/>
            <person name="McMurray A.A."/>
            <person name="Milne S.A."/>
            <person name="Mistry D."/>
            <person name="Moore M.J.F."/>
            <person name="Mullikin J.C."/>
            <person name="Nickerson T."/>
            <person name="Oliver K."/>
            <person name="Parker A."/>
            <person name="Patel R."/>
            <person name="Pearce T.A.V."/>
            <person name="Peck A.I."/>
            <person name="Phillimore B.J.C.T."/>
            <person name="Prathalingam S.R."/>
            <person name="Plumb R.W."/>
            <person name="Ramsay H."/>
            <person name="Rice C.M."/>
            <person name="Ross M.T."/>
            <person name="Scott C.E."/>
            <person name="Sehra H.K."/>
            <person name="Shownkeen R."/>
            <person name="Sims S."/>
            <person name="Skuce C.D."/>
            <person name="Smith M.L."/>
            <person name="Soderlund C."/>
            <person name="Steward C.A."/>
            <person name="Sulston J.E."/>
            <person name="Swann R.M."/>
            <person name="Sycamore N."/>
            <person name="Taylor R."/>
            <person name="Tee L."/>
            <person name="Thomas D.W."/>
            <person name="Thorpe A."/>
            <person name="Tracey A."/>
            <person name="Tromans A.C."/>
            <person name="Vaudin M."/>
            <person name="Wall M."/>
            <person name="Wallis J.M."/>
            <person name="Whitehead S.L."/>
            <person name="Whittaker P."/>
            <person name="Willey D.L."/>
            <person name="Williams L."/>
            <person name="Williams S.A."/>
            <person name="Wilming L."/>
            <person name="Wray P.W."/>
            <person name="Hubbard T."/>
            <person name="Durbin R.M."/>
            <person name="Bentley D.R."/>
            <person name="Beck S."/>
            <person name="Rogers J."/>
        </authorList>
    </citation>
    <scope>NUCLEOTIDE SEQUENCE [LARGE SCALE GENOMIC DNA]</scope>
</reference>
<reference key="4">
    <citation type="journal article" date="2004" name="Genome Res.">
        <title>The status, quality, and expansion of the NIH full-length cDNA project: the Mammalian Gene Collection (MGC).</title>
        <authorList>
            <consortium name="The MGC Project Team"/>
        </authorList>
    </citation>
    <scope>NUCLEOTIDE SEQUENCE [LARGE SCALE MRNA] (ISOFORMS 1 AND 2)</scope>
    <scope>VARIANT VAL-140</scope>
    <source>
        <tissue>Brain</tissue>
        <tissue>Placenta</tissue>
        <tissue>Urinary bladder</tissue>
    </source>
</reference>
<reference key="5">
    <citation type="journal article" date="2009" name="J. Biol. Chem.">
        <title>The SPTLC3 subunit of serine palmitoyltransferase generates short chain sphingoid bases.</title>
        <authorList>
            <person name="Hornemann T."/>
            <person name="Penno A."/>
            <person name="Ruetti M.F."/>
            <person name="Ernst D."/>
            <person name="Kivrak-Pfiffner F."/>
            <person name="Rohrer L."/>
            <person name="von Eckardstein A."/>
        </authorList>
    </citation>
    <scope>FUNCTION</scope>
    <scope>CATALYTIC ACTIVITY</scope>
    <scope>BIOPHYSICOCHEMICAL PROPERTIES</scope>
    <scope>PATHWAY</scope>
</reference>
<reference key="6">
    <citation type="journal article" date="2009" name="Proc. Natl. Acad. Sci. U.S.A.">
        <title>Identification of small subunits of mammalian serine palmitoyltransferase that confer distinct acyl-CoA substrate specificities.</title>
        <authorList>
            <person name="Han G."/>
            <person name="Gupta S.D."/>
            <person name="Gable K."/>
            <person name="Niranjanakumari S."/>
            <person name="Moitra P."/>
            <person name="Eichler F."/>
            <person name="Brown R.H. Jr."/>
            <person name="Harmon J.M."/>
            <person name="Dunn T.M."/>
        </authorList>
    </citation>
    <scope>FUNCTION</scope>
    <scope>CATALYTIC ACTIVITY</scope>
    <scope>IDENTIFICATION IN THE SPT COMPLEX</scope>
</reference>
<gene>
    <name evidence="14" type="primary">SPTLC3</name>
    <name type="synonym">C20orf38</name>
    <name type="synonym">SPTLC2L</name>
</gene>
<keyword id="KW-0012">Acyltransferase</keyword>
<keyword id="KW-0025">Alternative splicing</keyword>
<keyword id="KW-0256">Endoplasmic reticulum</keyword>
<keyword id="KW-0443">Lipid metabolism</keyword>
<keyword id="KW-0472">Membrane</keyword>
<keyword id="KW-1267">Proteomics identification</keyword>
<keyword id="KW-0663">Pyridoxal phosphate</keyword>
<keyword id="KW-1185">Reference proteome</keyword>
<keyword id="KW-0746">Sphingolipid metabolism</keyword>
<keyword id="KW-0808">Transferase</keyword>
<keyword id="KW-0812">Transmembrane</keyword>
<keyword id="KW-1133">Transmembrane helix</keyword>
<protein>
    <recommendedName>
        <fullName evidence="12">Serine palmitoyltransferase 3</fullName>
        <ecNumber evidence="7 8">2.3.1.50</ecNumber>
    </recommendedName>
    <alternativeName>
        <fullName>Long chain base biosynthesis protein 2b</fullName>
        <shortName evidence="11">LCB2b</shortName>
    </alternativeName>
    <alternativeName>
        <fullName>Long chain base biosynthesis protein 3</fullName>
        <shortName>LCB 3</shortName>
    </alternativeName>
    <alternativeName>
        <fullName>Serine-palmitoyl-CoA transferase 3</fullName>
        <shortName>SPT 3</shortName>
    </alternativeName>
</protein>
<sequence>MANPGGGAVCNGKLHNHKKQSNGSQSRNCTKNGIVKEAQQNGKPHFYDKLIVESFEEAPLHVMVFTYMGYGIGTLFGYLRDFLRNWGIEKCNAAVERKEQKDFVPLYQDFENFYTRNLYMRIRDNWNRPICSAPGPLFDLMERVSDDYNWTFRFTGRVIKDVINMGSYNFLGLAAKYDESMRTIKDVLEVYGTGVASTRHEMGTLDKHKELEDLVAKFLNVEAAMVFGMGFATNSMNIPALVGKGCLILSDELNHTSLVLGARLSGATIRIFKHNNTQSLEKLLRDAVIYGQPRTRRAWKKILILVEGVYSMEGSIVHLPQIIALKKKYKAYLYIDEAHSIGAVGPTGRGVTEFFGLDPHEVDVLMGTFTKSFGASGGYIAGRKDLVDYLRVHSHSAVYASSMSPPIAEQIIRSLKLIMGLDGTTQGLQRVQQLAKNTRYFRQRLQEMGFIIYGNENASVVPLLLYMPGKVAAFARHMLEKKIGVVVVGFPATPLAEARARFCVSAAHTREMLDTVLEALDEMGDLLQLKYSRHKKSARPELYDETSFELED</sequence>
<comment type="function">
    <text evidence="7 8">Component of the serine palmitoyltransferase multisubunit enzyme (SPT) that catalyzes the initial and rate-limiting step in sphingolipid biosynthesis by condensing L-serine and activated acyl-CoA (most commonly palmitoyl-CoA) to form long-chain bases (PubMed:19416851, PubMed:19648650). The SPT complex is composed of SPTLC1, SPTLC2 or SPTLC3 and SPTSSA or SPTSSB. Within this complex, the heterodimer consisting of SPTLC1 and SPTLC2/SPTLC3 forms the catalytic core. The composition of the serine palmitoyltransferase (SPT) complex determines the substrate preference (PubMed:19416851). The SPTLC1-SPTLC2-SPTSSA complex shows a strong preference for C16-CoA substrate, while the SPTLC1-SPTLC3-SPTSSA isozyme uses both C14-CoA and C16-CoA as substrates, with a slight preference for C14-CoA. The SPTLC1-SPTLC2-SPTSSB complex shows a strong preference for C18-CoA substrate, while the SPTLC1-SPTLC3-SPTSSB isozyme displays an ability to use a broader range of acyl-CoAs, without apparent preference (PubMed:19416851, PubMed:19648650).</text>
</comment>
<comment type="catalytic activity">
    <reaction evidence="6 7 8">
        <text>L-serine + hexadecanoyl-CoA + H(+) = 3-oxosphinganine + CO2 + CoA</text>
        <dbReference type="Rhea" id="RHEA:14761"/>
        <dbReference type="ChEBI" id="CHEBI:15378"/>
        <dbReference type="ChEBI" id="CHEBI:16526"/>
        <dbReference type="ChEBI" id="CHEBI:33384"/>
        <dbReference type="ChEBI" id="CHEBI:57287"/>
        <dbReference type="ChEBI" id="CHEBI:57379"/>
        <dbReference type="ChEBI" id="CHEBI:58299"/>
        <dbReference type="EC" id="2.3.1.50"/>
    </reaction>
    <physiologicalReaction direction="left-to-right" evidence="7 8">
        <dbReference type="Rhea" id="RHEA:14762"/>
    </physiologicalReaction>
</comment>
<comment type="catalytic activity">
    <reaction evidence="7 8">
        <text>dodecanoyl-CoA + L-serine + H(+) = 3-oxotetradecasphinganine + CO2 + CoA</text>
        <dbReference type="Rhea" id="RHEA:35679"/>
        <dbReference type="ChEBI" id="CHEBI:15378"/>
        <dbReference type="ChEBI" id="CHEBI:16526"/>
        <dbReference type="ChEBI" id="CHEBI:33384"/>
        <dbReference type="ChEBI" id="CHEBI:57287"/>
        <dbReference type="ChEBI" id="CHEBI:57375"/>
        <dbReference type="ChEBI" id="CHEBI:71008"/>
    </reaction>
    <physiologicalReaction direction="left-to-right" evidence="7 8">
        <dbReference type="Rhea" id="RHEA:35680"/>
    </physiologicalReaction>
</comment>
<comment type="catalytic activity">
    <reaction evidence="7 8">
        <text>tetradecanoyl-CoA + L-serine + H(+) = 3-oxohexadecasphinganine + CO2 + CoA</text>
        <dbReference type="Rhea" id="RHEA:35675"/>
        <dbReference type="ChEBI" id="CHEBI:15378"/>
        <dbReference type="ChEBI" id="CHEBI:16526"/>
        <dbReference type="ChEBI" id="CHEBI:33384"/>
        <dbReference type="ChEBI" id="CHEBI:57287"/>
        <dbReference type="ChEBI" id="CHEBI:57385"/>
        <dbReference type="ChEBI" id="CHEBI:71007"/>
    </reaction>
    <physiologicalReaction direction="left-to-right" evidence="7 8">
        <dbReference type="Rhea" id="RHEA:35676"/>
    </physiologicalReaction>
</comment>
<comment type="catalytic activity">
    <reaction evidence="7">
        <text>octadecanoyl-CoA + L-serine + H(+) = 3-oxoeicosasphinganine + CO2 + CoA</text>
        <dbReference type="Rhea" id="RHEA:33683"/>
        <dbReference type="ChEBI" id="CHEBI:15378"/>
        <dbReference type="ChEBI" id="CHEBI:16526"/>
        <dbReference type="ChEBI" id="CHEBI:33384"/>
        <dbReference type="ChEBI" id="CHEBI:57287"/>
        <dbReference type="ChEBI" id="CHEBI:57394"/>
        <dbReference type="ChEBI" id="CHEBI:65073"/>
    </reaction>
    <physiologicalReaction direction="left-to-right" evidence="7">
        <dbReference type="Rhea" id="RHEA:33684"/>
    </physiologicalReaction>
</comment>
<comment type="cofactor">
    <cofactor evidence="1">
        <name>pyridoxal 5'-phosphate</name>
        <dbReference type="ChEBI" id="CHEBI:597326"/>
    </cofactor>
</comment>
<comment type="activity regulation">
    <text evidence="2 12">SPT complex catalytic activity is negatively regulated by ORMDL proteins, including ORMDL3, in the presence of ceramides (By similarity). This mechanism allows to maintain ceramide levels at sufficient concentrations for the production of complex sphingolipids, but which prevents the accumulation of ceramides to levels that trigger apoptosis (Probable).</text>
</comment>
<comment type="biophysicochemical properties">
    <kinetics>
        <KM evidence="8">0.04 mM for hexadecanoyl-CoA</KM>
        <KM evidence="8">0.03 mM for tetradecanoyl-CoA</KM>
        <Vmax evidence="8">120.0 pmol/min/mg enzyme toward hexadecanoyl-CoA</Vmax>
        <Vmax evidence="8">60.0 pmol/min/mg enzyme toward tetradecanoyl-CoA</Vmax>
    </kinetics>
</comment>
<comment type="pathway">
    <text evidence="7 8">Lipid metabolism; sphingolipid metabolism.</text>
</comment>
<comment type="subunit">
    <text evidence="2 7">Component of the serine palmitoyltransferase (SPT) complex, which is composed of SPTLC1, SPTLC2 or SPTLC3 and SPTSSA or SPTSSB. The heterodimer consisting of SPTLC1 and SPTLC2/SPTLC3 forms the catalytic core of the enzyme, while SPTSSA or SPTSSB subunits determine substrate specificity (PubMed:19416851). SPT also interacts with ORMDL proteins, especially ORMDL3, which negatively regulate SPT activity in the presence of ceramides (By similarity).</text>
</comment>
<comment type="interaction">
    <interactant intactId="EBI-11614219">
        <id>Q9NUV7</id>
    </interactant>
    <interactant intactId="EBI-1044323">
        <id>O15269</id>
        <label>SPTLC1</label>
    </interactant>
    <organismsDiffer>false</organismsDiffer>
    <experiments>3</experiments>
</comment>
<comment type="subcellular location">
    <subcellularLocation>
        <location evidence="13">Endoplasmic reticulum membrane</location>
        <topology evidence="13">Single-pass membrane protein</topology>
    </subcellularLocation>
</comment>
<comment type="alternative products">
    <event type="alternative splicing"/>
    <isoform>
        <id>Q9NUV7-1</id>
        <name>1</name>
        <sequence type="displayed"/>
    </isoform>
    <isoform>
        <id>Q9NUV7-2</id>
        <name>2</name>
        <sequence type="described" ref="VSP_028167 VSP_028168"/>
    </isoform>
</comment>
<comment type="tissue specificity">
    <text evidence="6">Expressed in most tissues, except peripheral blood cells and bone marrow, with highest levels in heart, kidney, liver, uterus and skin.</text>
</comment>
<comment type="similarity">
    <text evidence="12">Belongs to the class-II pyridoxal-phosphate-dependent aminotransferase family.</text>
</comment>
<comment type="sequence caution" evidence="12">
    <conflict type="miscellaneous discrepancy">
        <sequence resource="EMBL-CDS" id="AAH05205"/>
    </conflict>
    <text>Contaminating sequence. Potential poly-A sequence.</text>
</comment>
<evidence type="ECO:0000250" key="1"/>
<evidence type="ECO:0000250" key="2">
    <source>
        <dbReference type="UniProtKB" id="O15270"/>
    </source>
</evidence>
<evidence type="ECO:0000255" key="3"/>
<evidence type="ECO:0000256" key="4">
    <source>
        <dbReference type="SAM" id="MobiDB-lite"/>
    </source>
</evidence>
<evidence type="ECO:0000269" key="5">
    <source>
    </source>
</evidence>
<evidence type="ECO:0000269" key="6">
    <source>
    </source>
</evidence>
<evidence type="ECO:0000269" key="7">
    <source>
    </source>
</evidence>
<evidence type="ECO:0000269" key="8">
    <source>
    </source>
</evidence>
<evidence type="ECO:0000303" key="9">
    <source>
    </source>
</evidence>
<evidence type="ECO:0000303" key="10">
    <source>
    </source>
</evidence>
<evidence type="ECO:0000303" key="11">
    <source>
    </source>
</evidence>
<evidence type="ECO:0000305" key="12"/>
<evidence type="ECO:0000305" key="13">
    <source>
    </source>
</evidence>
<evidence type="ECO:0000312" key="14">
    <source>
        <dbReference type="HGNC" id="HGNC:16253"/>
    </source>
</evidence>
<proteinExistence type="evidence at protein level"/>
<accession>Q9NUV7</accession>
<accession>A2A2I4</accession>
<accession>B9EK64</accession>
<accession>Q05DQ8</accession>
<accession>Q5T1U4</accession>
<accession>Q9H1L1</accession>
<accession>Q9H1Z0</accession>
<dbReference type="EC" id="2.3.1.50" evidence="7 8"/>
<dbReference type="EMBL" id="AK001974">
    <property type="protein sequence ID" value="BAA92012.1"/>
    <property type="molecule type" value="mRNA"/>
</dbReference>
<dbReference type="EMBL" id="AL133331">
    <property type="protein sequence ID" value="CAM13116.1"/>
    <property type="molecule type" value="Genomic_DNA"/>
</dbReference>
<dbReference type="EMBL" id="AL050320">
    <property type="protein sequence ID" value="CAM13116.1"/>
    <property type="status" value="JOINED"/>
    <property type="molecule type" value="Genomic_DNA"/>
</dbReference>
<dbReference type="EMBL" id="AL109983">
    <property type="protein sequence ID" value="CAM13116.1"/>
    <property type="status" value="JOINED"/>
    <property type="molecule type" value="Genomic_DNA"/>
</dbReference>
<dbReference type="EMBL" id="AL445589">
    <property type="protein sequence ID" value="CAM13116.1"/>
    <property type="status" value="JOINED"/>
    <property type="molecule type" value="Genomic_DNA"/>
</dbReference>
<dbReference type="EMBL" id="AL445589">
    <property type="protein sequence ID" value="CAM16427.1"/>
    <property type="molecule type" value="Genomic_DNA"/>
</dbReference>
<dbReference type="EMBL" id="AL050320">
    <property type="protein sequence ID" value="CAM16427.1"/>
    <property type="status" value="JOINED"/>
    <property type="molecule type" value="Genomic_DNA"/>
</dbReference>
<dbReference type="EMBL" id="AL109983">
    <property type="protein sequence ID" value="CAM16427.1"/>
    <property type="status" value="JOINED"/>
    <property type="molecule type" value="Genomic_DNA"/>
</dbReference>
<dbReference type="EMBL" id="AL133331">
    <property type="protein sequence ID" value="CAM16427.1"/>
    <property type="status" value="JOINED"/>
    <property type="molecule type" value="Genomic_DNA"/>
</dbReference>
<dbReference type="EMBL" id="AL050320">
    <property type="protein sequence ID" value="CAM27358.1"/>
    <property type="molecule type" value="Genomic_DNA"/>
</dbReference>
<dbReference type="EMBL" id="AL109983">
    <property type="protein sequence ID" value="CAM27358.1"/>
    <property type="status" value="JOINED"/>
    <property type="molecule type" value="Genomic_DNA"/>
</dbReference>
<dbReference type="EMBL" id="AL133331">
    <property type="protein sequence ID" value="CAM27358.1"/>
    <property type="status" value="JOINED"/>
    <property type="molecule type" value="Genomic_DNA"/>
</dbReference>
<dbReference type="EMBL" id="AL445589">
    <property type="protein sequence ID" value="CAM27358.1"/>
    <property type="status" value="JOINED"/>
    <property type="molecule type" value="Genomic_DNA"/>
</dbReference>
<dbReference type="EMBL" id="AL109983">
    <property type="protein sequence ID" value="CAM28300.1"/>
    <property type="molecule type" value="Genomic_DNA"/>
</dbReference>
<dbReference type="EMBL" id="AL050320">
    <property type="protein sequence ID" value="CAM28300.1"/>
    <property type="status" value="JOINED"/>
    <property type="molecule type" value="Genomic_DNA"/>
</dbReference>
<dbReference type="EMBL" id="AL133331">
    <property type="protein sequence ID" value="CAM28300.1"/>
    <property type="status" value="JOINED"/>
    <property type="molecule type" value="Genomic_DNA"/>
</dbReference>
<dbReference type="EMBL" id="AL445589">
    <property type="protein sequence ID" value="CAM28300.1"/>
    <property type="status" value="JOINED"/>
    <property type="molecule type" value="Genomic_DNA"/>
</dbReference>
<dbReference type="EMBL" id="BC005205">
    <property type="protein sequence ID" value="AAH05205.1"/>
    <property type="status" value="ALT_SEQ"/>
    <property type="molecule type" value="mRNA"/>
</dbReference>
<dbReference type="EMBL" id="BC020656">
    <property type="protein sequence ID" value="AAH20656.1"/>
    <property type="molecule type" value="mRNA"/>
</dbReference>
<dbReference type="EMBL" id="BC150644">
    <property type="protein sequence ID" value="AAI50645.1"/>
    <property type="molecule type" value="mRNA"/>
</dbReference>
<dbReference type="CCDS" id="CCDS13115.2">
    <molecule id="Q9NUV7-1"/>
</dbReference>
<dbReference type="RefSeq" id="NP_001336874.1">
    <molecule id="Q9NUV7-1"/>
    <property type="nucleotide sequence ID" value="NM_001349945.2"/>
</dbReference>
<dbReference type="RefSeq" id="NP_060797.2">
    <molecule id="Q9NUV7-1"/>
    <property type="nucleotide sequence ID" value="NM_018327.4"/>
</dbReference>
<dbReference type="RefSeq" id="XP_054179588.1">
    <molecule id="Q9NUV7-1"/>
    <property type="nucleotide sequence ID" value="XM_054323613.1"/>
</dbReference>
<dbReference type="SMR" id="Q9NUV7"/>
<dbReference type="BioGRID" id="120590">
    <property type="interactions" value="11"/>
</dbReference>
<dbReference type="ComplexPortal" id="CPX-6665">
    <property type="entry name" value="Serine palmitoyltransferase complex, SPTLC1-SPTLC3-SPTSSA variant"/>
</dbReference>
<dbReference type="ComplexPortal" id="CPX-6681">
    <property type="entry name" value="Serine palmitoyltransferase complex, SPTLC1-SPTLC3-SPTSSB variant"/>
</dbReference>
<dbReference type="CORUM" id="Q9NUV7"/>
<dbReference type="DIP" id="DIP-60753N"/>
<dbReference type="FunCoup" id="Q9NUV7">
    <property type="interactions" value="505"/>
</dbReference>
<dbReference type="IntAct" id="Q9NUV7">
    <property type="interactions" value="10"/>
</dbReference>
<dbReference type="STRING" id="9606.ENSP00000381968"/>
<dbReference type="DrugBank" id="DB00114">
    <property type="generic name" value="Pyridoxal phosphate"/>
</dbReference>
<dbReference type="SwissLipids" id="SLP:000000153"/>
<dbReference type="GlyGen" id="Q9NUV7">
    <property type="glycosylation" value="1 site"/>
</dbReference>
<dbReference type="iPTMnet" id="Q9NUV7"/>
<dbReference type="PhosphoSitePlus" id="Q9NUV7"/>
<dbReference type="SwissPalm" id="Q9NUV7"/>
<dbReference type="BioMuta" id="SPTLC3"/>
<dbReference type="DMDM" id="158931158"/>
<dbReference type="jPOST" id="Q9NUV7"/>
<dbReference type="MassIVE" id="Q9NUV7"/>
<dbReference type="PaxDb" id="9606-ENSP00000381968"/>
<dbReference type="PeptideAtlas" id="Q9NUV7"/>
<dbReference type="ProteomicsDB" id="82722">
    <molecule id="Q9NUV7-1"/>
</dbReference>
<dbReference type="ProteomicsDB" id="82723">
    <molecule id="Q9NUV7-2"/>
</dbReference>
<dbReference type="Pumba" id="Q9NUV7"/>
<dbReference type="Antibodypedia" id="70994">
    <property type="antibodies" value="61 antibodies from 12 providers"/>
</dbReference>
<dbReference type="DNASU" id="55304"/>
<dbReference type="Ensembl" id="ENST00000399002.7">
    <molecule id="Q9NUV7-1"/>
    <property type="protein sequence ID" value="ENSP00000381968.2"/>
    <property type="gene ID" value="ENSG00000172296.13"/>
</dbReference>
<dbReference type="GeneID" id="55304"/>
<dbReference type="KEGG" id="hsa:55304"/>
<dbReference type="MANE-Select" id="ENST00000399002.7">
    <property type="protein sequence ID" value="ENSP00000381968.2"/>
    <property type="RefSeq nucleotide sequence ID" value="NM_018327.4"/>
    <property type="RefSeq protein sequence ID" value="NP_060797.2"/>
</dbReference>
<dbReference type="UCSC" id="uc002wod.2">
    <molecule id="Q9NUV7-1"/>
    <property type="organism name" value="human"/>
</dbReference>
<dbReference type="AGR" id="HGNC:16253"/>
<dbReference type="CTD" id="55304"/>
<dbReference type="DisGeNET" id="55304"/>
<dbReference type="GeneCards" id="SPTLC3"/>
<dbReference type="HGNC" id="HGNC:16253">
    <property type="gene designation" value="SPTLC3"/>
</dbReference>
<dbReference type="HPA" id="ENSG00000172296">
    <property type="expression patterns" value="Low tissue specificity"/>
</dbReference>
<dbReference type="MIM" id="611120">
    <property type="type" value="gene"/>
</dbReference>
<dbReference type="neXtProt" id="NX_Q9NUV7"/>
<dbReference type="OpenTargets" id="ENSG00000172296"/>
<dbReference type="PharmGKB" id="PA162404677"/>
<dbReference type="VEuPathDB" id="HostDB:ENSG00000172296"/>
<dbReference type="eggNOG" id="KOG1357">
    <property type="taxonomic scope" value="Eukaryota"/>
</dbReference>
<dbReference type="GeneTree" id="ENSGT00940000158513"/>
<dbReference type="HOGENOM" id="CLU_015846_7_1_1"/>
<dbReference type="InParanoid" id="Q9NUV7"/>
<dbReference type="OMA" id="MFGSNAY"/>
<dbReference type="OrthoDB" id="65434at2759"/>
<dbReference type="PAN-GO" id="Q9NUV7">
    <property type="GO annotations" value="4 GO annotations based on evolutionary models"/>
</dbReference>
<dbReference type="PhylomeDB" id="Q9NUV7"/>
<dbReference type="TreeFam" id="TF300452"/>
<dbReference type="BioCyc" id="MetaCyc:HS16070-MONOMER"/>
<dbReference type="BRENDA" id="2.3.1.50">
    <property type="organism ID" value="2681"/>
</dbReference>
<dbReference type="PathwayCommons" id="Q9NUV7"/>
<dbReference type="Reactome" id="R-HSA-1660661">
    <property type="pathway name" value="Sphingolipid de novo biosynthesis"/>
</dbReference>
<dbReference type="SignaLink" id="Q9NUV7"/>
<dbReference type="UniPathway" id="UPA00222"/>
<dbReference type="BioGRID-ORCS" id="55304">
    <property type="hits" value="7 hits in 1155 CRISPR screens"/>
</dbReference>
<dbReference type="GenomeRNAi" id="55304"/>
<dbReference type="Pharos" id="Q9NUV7">
    <property type="development level" value="Tbio"/>
</dbReference>
<dbReference type="PRO" id="PR:Q9NUV7"/>
<dbReference type="Proteomes" id="UP000005640">
    <property type="component" value="Chromosome 20"/>
</dbReference>
<dbReference type="RNAct" id="Q9NUV7">
    <property type="molecule type" value="protein"/>
</dbReference>
<dbReference type="Bgee" id="ENSG00000172296">
    <property type="expression patterns" value="Expressed in buccal mucosa cell and 155 other cell types or tissues"/>
</dbReference>
<dbReference type="ExpressionAtlas" id="Q9NUV7">
    <property type="expression patterns" value="baseline and differential"/>
</dbReference>
<dbReference type="GO" id="GO:0005789">
    <property type="term" value="C:endoplasmic reticulum membrane"/>
    <property type="evidence" value="ECO:0000304"/>
    <property type="project" value="Reactome"/>
</dbReference>
<dbReference type="GO" id="GO:0017059">
    <property type="term" value="C:serine palmitoyltransferase complex"/>
    <property type="evidence" value="ECO:0000314"/>
    <property type="project" value="UniProtKB"/>
</dbReference>
<dbReference type="GO" id="GO:0030170">
    <property type="term" value="F:pyridoxal phosphate binding"/>
    <property type="evidence" value="ECO:0007669"/>
    <property type="project" value="InterPro"/>
</dbReference>
<dbReference type="GO" id="GO:0004758">
    <property type="term" value="F:serine C-palmitoyltransferase activity"/>
    <property type="evidence" value="ECO:0000314"/>
    <property type="project" value="UniProtKB"/>
</dbReference>
<dbReference type="GO" id="GO:0046513">
    <property type="term" value="P:ceramide biosynthetic process"/>
    <property type="evidence" value="ECO:0000318"/>
    <property type="project" value="GO_Central"/>
</dbReference>
<dbReference type="GO" id="GO:0046520">
    <property type="term" value="P:sphingoid biosynthetic process"/>
    <property type="evidence" value="ECO:0000314"/>
    <property type="project" value="MGI"/>
</dbReference>
<dbReference type="GO" id="GO:0030148">
    <property type="term" value="P:sphingolipid biosynthetic process"/>
    <property type="evidence" value="ECO:0000304"/>
    <property type="project" value="UniProtKB"/>
</dbReference>
<dbReference type="GO" id="GO:0046512">
    <property type="term" value="P:sphingosine biosynthetic process"/>
    <property type="evidence" value="ECO:0000314"/>
    <property type="project" value="ComplexPortal"/>
</dbReference>
<dbReference type="CDD" id="cd06454">
    <property type="entry name" value="KBL_like"/>
    <property type="match status" value="1"/>
</dbReference>
<dbReference type="FunFam" id="3.90.1150.10:FF:000004">
    <property type="entry name" value="2-amino-3-ketobutyrate coenzyme A ligase"/>
    <property type="match status" value="1"/>
</dbReference>
<dbReference type="FunFam" id="3.40.640.10:FF:000047">
    <property type="entry name" value="serine palmitoyltransferase 2 isoform X1"/>
    <property type="match status" value="1"/>
</dbReference>
<dbReference type="Gene3D" id="3.90.1150.10">
    <property type="entry name" value="Aspartate Aminotransferase, domain 1"/>
    <property type="match status" value="1"/>
</dbReference>
<dbReference type="Gene3D" id="3.40.640.10">
    <property type="entry name" value="Type I PLP-dependent aspartate aminotransferase-like (Major domain)"/>
    <property type="match status" value="1"/>
</dbReference>
<dbReference type="InterPro" id="IPR001917">
    <property type="entry name" value="Aminotrans_II_pyridoxalP_BS"/>
</dbReference>
<dbReference type="InterPro" id="IPR004839">
    <property type="entry name" value="Aminotransferase_I/II_large"/>
</dbReference>
<dbReference type="InterPro" id="IPR050087">
    <property type="entry name" value="AON_synthase_class-II"/>
</dbReference>
<dbReference type="InterPro" id="IPR015424">
    <property type="entry name" value="PyrdxlP-dep_Trfase"/>
</dbReference>
<dbReference type="InterPro" id="IPR015421">
    <property type="entry name" value="PyrdxlP-dep_Trfase_major"/>
</dbReference>
<dbReference type="InterPro" id="IPR015422">
    <property type="entry name" value="PyrdxlP-dep_Trfase_small"/>
</dbReference>
<dbReference type="PANTHER" id="PTHR13693">
    <property type="entry name" value="CLASS II AMINOTRANSFERASE/8-AMINO-7-OXONONANOATE SYNTHASE"/>
    <property type="match status" value="1"/>
</dbReference>
<dbReference type="PANTHER" id="PTHR13693:SF56">
    <property type="entry name" value="SERINE PALMITOYLTRANSFERASE 3"/>
    <property type="match status" value="1"/>
</dbReference>
<dbReference type="Pfam" id="PF00155">
    <property type="entry name" value="Aminotran_1_2"/>
    <property type="match status" value="1"/>
</dbReference>
<dbReference type="SUPFAM" id="SSF53383">
    <property type="entry name" value="PLP-dependent transferases"/>
    <property type="match status" value="1"/>
</dbReference>
<dbReference type="PROSITE" id="PS00599">
    <property type="entry name" value="AA_TRANSFER_CLASS_2"/>
    <property type="match status" value="1"/>
</dbReference>
<feature type="chain" id="PRO_0000079426" description="Serine palmitoyltransferase 3">
    <location>
        <begin position="1"/>
        <end position="552"/>
    </location>
</feature>
<feature type="transmembrane region" description="Helical" evidence="3">
    <location>
        <begin position="59"/>
        <end position="79"/>
    </location>
</feature>
<feature type="region of interest" description="Disordered" evidence="4">
    <location>
        <begin position="1"/>
        <end position="29"/>
    </location>
</feature>
<feature type="modified residue" description="N6-(pyridoxal phosphate)lysine" evidence="1">
    <location>
        <position position="371"/>
    </location>
</feature>
<feature type="splice variant" id="VSP_028167" description="In isoform 2." evidence="9 10">
    <original>DFVPLYQDFENFYTRNLYMRIRDNWNRPICSAPGPLFDLMERVSDDYNWTFRFTGRVIKDVINMGSYNFLGLAA</original>
    <variation>VRMRTSLDLCQCLLLSKVFSEVVMQVQILESMRCSGTIQGKFHSSPPPKPHYPWAYGPVFTNISWATTICHIPN</variation>
    <location>
        <begin position="102"/>
        <end position="175"/>
    </location>
</feature>
<feature type="splice variant" id="VSP_028168" description="In isoform 2." evidence="9 10">
    <location>
        <begin position="176"/>
        <end position="552"/>
    </location>
</feature>
<feature type="sequence variant" id="VAR_048230" description="In dbSNP:rs243887." evidence="5">
    <original>L</original>
    <variation>V</variation>
    <location>
        <position position="140"/>
    </location>
</feature>
<feature type="sequence variant" id="VAR_082794" description="In dbSNP:rs934335." evidence="12">
    <original>P</original>
    <variation>A</variation>
    <location sequence="Q9NUV7-2">
        <position position="149"/>
    </location>
</feature>